<comment type="function">
    <text evidence="1">Nicotinic acid adenine dinucleotide phosphate (NAADP) binding protein.</text>
</comment>
<comment type="subcellular location">
    <subcellularLocation>
        <location evidence="1">Cytoplasm</location>
    </subcellularLocation>
</comment>
<comment type="similarity">
    <text evidence="5">Belongs to the LSM12 family.</text>
</comment>
<feature type="chain" id="PRO_0000305132" description="Protein LSM12">
    <location>
        <begin position="1"/>
        <end position="194"/>
    </location>
</feature>
<feature type="domain" description="Sm" evidence="3">
    <location>
        <begin position="1"/>
        <end position="71"/>
    </location>
</feature>
<feature type="domain" description="AD" evidence="2">
    <location>
        <begin position="79"/>
        <end position="173"/>
    </location>
</feature>
<feature type="region of interest" description="Disordered" evidence="4">
    <location>
        <begin position="175"/>
        <end position="194"/>
    </location>
</feature>
<feature type="compositionally biased region" description="Polar residues" evidence="4">
    <location>
        <begin position="176"/>
        <end position="194"/>
    </location>
</feature>
<accession>Q6GP89</accession>
<organism>
    <name type="scientific">Xenopus laevis</name>
    <name type="common">African clawed frog</name>
    <dbReference type="NCBI Taxonomy" id="8355"/>
    <lineage>
        <taxon>Eukaryota</taxon>
        <taxon>Metazoa</taxon>
        <taxon>Chordata</taxon>
        <taxon>Craniata</taxon>
        <taxon>Vertebrata</taxon>
        <taxon>Euteleostomi</taxon>
        <taxon>Amphibia</taxon>
        <taxon>Batrachia</taxon>
        <taxon>Anura</taxon>
        <taxon>Pipoidea</taxon>
        <taxon>Pipidae</taxon>
        <taxon>Xenopodinae</taxon>
        <taxon>Xenopus</taxon>
        <taxon>Xenopus</taxon>
    </lineage>
</organism>
<gene>
    <name type="primary">lsm12</name>
</gene>
<dbReference type="EMBL" id="BC073252">
    <property type="protein sequence ID" value="AAH73252.1"/>
    <property type="molecule type" value="mRNA"/>
</dbReference>
<dbReference type="RefSeq" id="NP_001085724.1">
    <property type="nucleotide sequence ID" value="NM_001092255.1"/>
</dbReference>
<dbReference type="DNASU" id="444151"/>
<dbReference type="GeneID" id="444151"/>
<dbReference type="KEGG" id="xla:444151"/>
<dbReference type="AGR" id="Xenbase:XB-GENE-17332287"/>
<dbReference type="CTD" id="444151"/>
<dbReference type="Xenbase" id="XB-GENE-17332287">
    <property type="gene designation" value="lsm12.S"/>
</dbReference>
<dbReference type="OrthoDB" id="1057137at2759"/>
<dbReference type="Proteomes" id="UP000186698">
    <property type="component" value="Chromosome 9_10S"/>
</dbReference>
<dbReference type="Bgee" id="444151">
    <property type="expression patterns" value="Expressed in blastula and 19 other cell types or tissues"/>
</dbReference>
<dbReference type="GO" id="GO:0005737">
    <property type="term" value="C:cytoplasm"/>
    <property type="evidence" value="ECO:0000250"/>
    <property type="project" value="UniProtKB"/>
</dbReference>
<dbReference type="GO" id="GO:0003723">
    <property type="term" value="F:RNA binding"/>
    <property type="evidence" value="ECO:0007669"/>
    <property type="project" value="InterPro"/>
</dbReference>
<dbReference type="CDD" id="cd01735">
    <property type="entry name" value="LSm12_N"/>
    <property type="match status" value="1"/>
</dbReference>
<dbReference type="InterPro" id="IPR047574">
    <property type="entry name" value="AD"/>
</dbReference>
<dbReference type="InterPro" id="IPR039683">
    <property type="entry name" value="Lsm12-like"/>
</dbReference>
<dbReference type="InterPro" id="IPR019181">
    <property type="entry name" value="LSM12_ABD"/>
</dbReference>
<dbReference type="InterPro" id="IPR048478">
    <property type="entry name" value="LSM12_LSM"/>
</dbReference>
<dbReference type="InterPro" id="IPR047575">
    <property type="entry name" value="Sm"/>
</dbReference>
<dbReference type="PANTHER" id="PTHR13542">
    <property type="entry name" value="LSM12 HOMOLOG"/>
    <property type="match status" value="1"/>
</dbReference>
<dbReference type="Pfam" id="PF09793">
    <property type="entry name" value="AD"/>
    <property type="match status" value="1"/>
</dbReference>
<dbReference type="Pfam" id="PF21166">
    <property type="entry name" value="LSM12_LSM"/>
    <property type="match status" value="1"/>
</dbReference>
<dbReference type="SMART" id="SM00995">
    <property type="entry name" value="AD"/>
    <property type="match status" value="1"/>
</dbReference>
<dbReference type="PROSITE" id="PS52001">
    <property type="entry name" value="AD"/>
    <property type="match status" value="1"/>
</dbReference>
<dbReference type="PROSITE" id="PS52002">
    <property type="entry name" value="SM"/>
    <property type="match status" value="1"/>
</dbReference>
<sequence length="194" mass="21499">MAGPGEYFAIGAYVSCRTCQETRLQGEVVAFDYPSKMLALKCPSSSGKANHADILLLNLDYVSDVEVINERTQTPPPLASLNITKLASRARLEKEEKLSQAYAISAGVSLDGQQLFQTIHKTIKDCKWQEKNIVVMDEVVISPPYQVENCKGKEGRALTHVCKIVEKHFRDVENQKGVQRNPVAQSQKETSTSS</sequence>
<protein>
    <recommendedName>
        <fullName>Protein LSM12</fullName>
    </recommendedName>
</protein>
<name>LSM12_XENLA</name>
<keyword id="KW-0963">Cytoplasm</keyword>
<keyword id="KW-1185">Reference proteome</keyword>
<reference key="1">
    <citation type="submission" date="2004-06" db="EMBL/GenBank/DDBJ databases">
        <authorList>
            <consortium name="NIH - Xenopus Gene Collection (XGC) project"/>
        </authorList>
    </citation>
    <scope>NUCLEOTIDE SEQUENCE [LARGE SCALE MRNA]</scope>
    <source>
        <tissue>Spleen</tissue>
    </source>
</reference>
<evidence type="ECO:0000250" key="1">
    <source>
        <dbReference type="UniProtKB" id="Q3MHD2"/>
    </source>
</evidence>
<evidence type="ECO:0000255" key="2">
    <source>
        <dbReference type="PROSITE-ProRule" id="PRU01345"/>
    </source>
</evidence>
<evidence type="ECO:0000255" key="3">
    <source>
        <dbReference type="PROSITE-ProRule" id="PRU01346"/>
    </source>
</evidence>
<evidence type="ECO:0000256" key="4">
    <source>
        <dbReference type="SAM" id="MobiDB-lite"/>
    </source>
</evidence>
<evidence type="ECO:0000305" key="5"/>
<proteinExistence type="evidence at transcript level"/>